<dbReference type="EC" id="7.4.2.8" evidence="1"/>
<dbReference type="EMBL" id="CP000901">
    <property type="protein sequence ID" value="ABX88077.1"/>
    <property type="molecule type" value="Genomic_DNA"/>
</dbReference>
<dbReference type="RefSeq" id="WP_002210426.1">
    <property type="nucleotide sequence ID" value="NZ_CP009935.1"/>
</dbReference>
<dbReference type="SMR" id="A9R0R9"/>
<dbReference type="GeneID" id="57974051"/>
<dbReference type="KEGG" id="ypg:YpAngola_A2909"/>
<dbReference type="PATRIC" id="fig|349746.12.peg.3952"/>
<dbReference type="GO" id="GO:0031522">
    <property type="term" value="C:cell envelope Sec protein transport complex"/>
    <property type="evidence" value="ECO:0007669"/>
    <property type="project" value="TreeGrafter"/>
</dbReference>
<dbReference type="GO" id="GO:0005829">
    <property type="term" value="C:cytosol"/>
    <property type="evidence" value="ECO:0007669"/>
    <property type="project" value="TreeGrafter"/>
</dbReference>
<dbReference type="GO" id="GO:0005886">
    <property type="term" value="C:plasma membrane"/>
    <property type="evidence" value="ECO:0007669"/>
    <property type="project" value="UniProtKB-SubCell"/>
</dbReference>
<dbReference type="GO" id="GO:0005524">
    <property type="term" value="F:ATP binding"/>
    <property type="evidence" value="ECO:0007669"/>
    <property type="project" value="UniProtKB-UniRule"/>
</dbReference>
<dbReference type="GO" id="GO:0046872">
    <property type="term" value="F:metal ion binding"/>
    <property type="evidence" value="ECO:0007669"/>
    <property type="project" value="UniProtKB-KW"/>
</dbReference>
<dbReference type="GO" id="GO:0008564">
    <property type="term" value="F:protein-exporting ATPase activity"/>
    <property type="evidence" value="ECO:0007669"/>
    <property type="project" value="UniProtKB-EC"/>
</dbReference>
<dbReference type="GO" id="GO:0065002">
    <property type="term" value="P:intracellular protein transmembrane transport"/>
    <property type="evidence" value="ECO:0007669"/>
    <property type="project" value="UniProtKB-UniRule"/>
</dbReference>
<dbReference type="GO" id="GO:0017038">
    <property type="term" value="P:protein import"/>
    <property type="evidence" value="ECO:0007669"/>
    <property type="project" value="InterPro"/>
</dbReference>
<dbReference type="GO" id="GO:0006605">
    <property type="term" value="P:protein targeting"/>
    <property type="evidence" value="ECO:0007669"/>
    <property type="project" value="UniProtKB-UniRule"/>
</dbReference>
<dbReference type="GO" id="GO:0043952">
    <property type="term" value="P:protein transport by the Sec complex"/>
    <property type="evidence" value="ECO:0007669"/>
    <property type="project" value="TreeGrafter"/>
</dbReference>
<dbReference type="CDD" id="cd17928">
    <property type="entry name" value="DEXDc_SecA"/>
    <property type="match status" value="1"/>
</dbReference>
<dbReference type="CDD" id="cd18803">
    <property type="entry name" value="SF2_C_secA"/>
    <property type="match status" value="1"/>
</dbReference>
<dbReference type="FunFam" id="1.10.3060.10:FF:000001">
    <property type="entry name" value="Preprotein translocase subunit SecA"/>
    <property type="match status" value="1"/>
</dbReference>
<dbReference type="FunFam" id="3.40.50.300:FF:000081">
    <property type="entry name" value="Preprotein translocase subunit SecA"/>
    <property type="match status" value="1"/>
</dbReference>
<dbReference type="FunFam" id="3.40.50.300:FF:000113">
    <property type="entry name" value="Preprotein translocase subunit SecA"/>
    <property type="match status" value="1"/>
</dbReference>
<dbReference type="FunFam" id="3.90.1440.10:FF:000001">
    <property type="entry name" value="Preprotein translocase subunit SecA"/>
    <property type="match status" value="1"/>
</dbReference>
<dbReference type="Gene3D" id="1.10.3060.10">
    <property type="entry name" value="Helical scaffold and wing domains of SecA"/>
    <property type="match status" value="1"/>
</dbReference>
<dbReference type="Gene3D" id="3.40.50.300">
    <property type="entry name" value="P-loop containing nucleotide triphosphate hydrolases"/>
    <property type="match status" value="2"/>
</dbReference>
<dbReference type="Gene3D" id="3.90.1440.10">
    <property type="entry name" value="SecA, preprotein cross-linking domain"/>
    <property type="match status" value="1"/>
</dbReference>
<dbReference type="HAMAP" id="MF_01382">
    <property type="entry name" value="SecA"/>
    <property type="match status" value="1"/>
</dbReference>
<dbReference type="InterPro" id="IPR014001">
    <property type="entry name" value="Helicase_ATP-bd"/>
</dbReference>
<dbReference type="InterPro" id="IPR027417">
    <property type="entry name" value="P-loop_NTPase"/>
</dbReference>
<dbReference type="InterPro" id="IPR004027">
    <property type="entry name" value="SEC_C_motif"/>
</dbReference>
<dbReference type="InterPro" id="IPR000185">
    <property type="entry name" value="SecA"/>
</dbReference>
<dbReference type="InterPro" id="IPR020937">
    <property type="entry name" value="SecA_CS"/>
</dbReference>
<dbReference type="InterPro" id="IPR011115">
    <property type="entry name" value="SecA_DEAD"/>
</dbReference>
<dbReference type="InterPro" id="IPR014018">
    <property type="entry name" value="SecA_motor_DEAD"/>
</dbReference>
<dbReference type="InterPro" id="IPR011130">
    <property type="entry name" value="SecA_preprotein_X-link_dom"/>
</dbReference>
<dbReference type="InterPro" id="IPR044722">
    <property type="entry name" value="SecA_SF2_C"/>
</dbReference>
<dbReference type="InterPro" id="IPR011116">
    <property type="entry name" value="SecA_Wing/Scaffold"/>
</dbReference>
<dbReference type="InterPro" id="IPR036266">
    <property type="entry name" value="SecA_Wing/Scaffold_sf"/>
</dbReference>
<dbReference type="InterPro" id="IPR036670">
    <property type="entry name" value="SecA_X-link_sf"/>
</dbReference>
<dbReference type="NCBIfam" id="NF009538">
    <property type="entry name" value="PRK12904.1"/>
    <property type="match status" value="1"/>
</dbReference>
<dbReference type="NCBIfam" id="TIGR00963">
    <property type="entry name" value="secA"/>
    <property type="match status" value="1"/>
</dbReference>
<dbReference type="PANTHER" id="PTHR30612:SF0">
    <property type="entry name" value="CHLOROPLAST PROTEIN-TRANSPORTING ATPASE"/>
    <property type="match status" value="1"/>
</dbReference>
<dbReference type="PANTHER" id="PTHR30612">
    <property type="entry name" value="SECA INNER MEMBRANE COMPONENT OF SEC PROTEIN SECRETION SYSTEM"/>
    <property type="match status" value="1"/>
</dbReference>
<dbReference type="Pfam" id="PF21090">
    <property type="entry name" value="P-loop_SecA"/>
    <property type="match status" value="1"/>
</dbReference>
<dbReference type="Pfam" id="PF02810">
    <property type="entry name" value="SEC-C"/>
    <property type="match status" value="1"/>
</dbReference>
<dbReference type="Pfam" id="PF07517">
    <property type="entry name" value="SecA_DEAD"/>
    <property type="match status" value="1"/>
</dbReference>
<dbReference type="Pfam" id="PF01043">
    <property type="entry name" value="SecA_PP_bind"/>
    <property type="match status" value="1"/>
</dbReference>
<dbReference type="Pfam" id="PF07516">
    <property type="entry name" value="SecA_SW"/>
    <property type="match status" value="1"/>
</dbReference>
<dbReference type="PRINTS" id="PR00906">
    <property type="entry name" value="SECA"/>
</dbReference>
<dbReference type="SMART" id="SM00957">
    <property type="entry name" value="SecA_DEAD"/>
    <property type="match status" value="1"/>
</dbReference>
<dbReference type="SMART" id="SM00958">
    <property type="entry name" value="SecA_PP_bind"/>
    <property type="match status" value="1"/>
</dbReference>
<dbReference type="SUPFAM" id="SSF81886">
    <property type="entry name" value="Helical scaffold and wing domains of SecA"/>
    <property type="match status" value="1"/>
</dbReference>
<dbReference type="SUPFAM" id="SSF52540">
    <property type="entry name" value="P-loop containing nucleoside triphosphate hydrolases"/>
    <property type="match status" value="2"/>
</dbReference>
<dbReference type="SUPFAM" id="SSF81767">
    <property type="entry name" value="Pre-protein crosslinking domain of SecA"/>
    <property type="match status" value="1"/>
</dbReference>
<dbReference type="PROSITE" id="PS01312">
    <property type="entry name" value="SECA"/>
    <property type="match status" value="1"/>
</dbReference>
<dbReference type="PROSITE" id="PS51196">
    <property type="entry name" value="SECA_MOTOR_DEAD"/>
    <property type="match status" value="1"/>
</dbReference>
<proteinExistence type="inferred from homology"/>
<gene>
    <name evidence="1" type="primary">secA</name>
    <name type="ordered locus">YpAngola_A2909</name>
</gene>
<organism>
    <name type="scientific">Yersinia pestis bv. Antiqua (strain Angola)</name>
    <dbReference type="NCBI Taxonomy" id="349746"/>
    <lineage>
        <taxon>Bacteria</taxon>
        <taxon>Pseudomonadati</taxon>
        <taxon>Pseudomonadota</taxon>
        <taxon>Gammaproteobacteria</taxon>
        <taxon>Enterobacterales</taxon>
        <taxon>Yersiniaceae</taxon>
        <taxon>Yersinia</taxon>
    </lineage>
</organism>
<feature type="chain" id="PRO_1000145082" description="Protein translocase subunit SecA">
    <location>
        <begin position="1"/>
        <end position="904"/>
    </location>
</feature>
<feature type="region of interest" description="Disordered" evidence="2">
    <location>
        <begin position="851"/>
        <end position="870"/>
    </location>
</feature>
<feature type="binding site" evidence="1">
    <location>
        <position position="87"/>
    </location>
    <ligand>
        <name>ATP</name>
        <dbReference type="ChEBI" id="CHEBI:30616"/>
    </ligand>
</feature>
<feature type="binding site" evidence="1">
    <location>
        <begin position="105"/>
        <end position="109"/>
    </location>
    <ligand>
        <name>ATP</name>
        <dbReference type="ChEBI" id="CHEBI:30616"/>
    </ligand>
</feature>
<feature type="binding site" evidence="1">
    <location>
        <position position="512"/>
    </location>
    <ligand>
        <name>ATP</name>
        <dbReference type="ChEBI" id="CHEBI:30616"/>
    </ligand>
</feature>
<feature type="binding site" evidence="1">
    <location>
        <position position="888"/>
    </location>
    <ligand>
        <name>Zn(2+)</name>
        <dbReference type="ChEBI" id="CHEBI:29105"/>
    </ligand>
</feature>
<feature type="binding site" evidence="1">
    <location>
        <position position="890"/>
    </location>
    <ligand>
        <name>Zn(2+)</name>
        <dbReference type="ChEBI" id="CHEBI:29105"/>
    </ligand>
</feature>
<feature type="binding site" evidence="1">
    <location>
        <position position="899"/>
    </location>
    <ligand>
        <name>Zn(2+)</name>
        <dbReference type="ChEBI" id="CHEBI:29105"/>
    </ligand>
</feature>
<feature type="binding site" evidence="1">
    <location>
        <position position="900"/>
    </location>
    <ligand>
        <name>Zn(2+)</name>
        <dbReference type="ChEBI" id="CHEBI:29105"/>
    </ligand>
</feature>
<evidence type="ECO:0000255" key="1">
    <source>
        <dbReference type="HAMAP-Rule" id="MF_01382"/>
    </source>
</evidence>
<evidence type="ECO:0000256" key="2">
    <source>
        <dbReference type="SAM" id="MobiDB-lite"/>
    </source>
</evidence>
<protein>
    <recommendedName>
        <fullName evidence="1">Protein translocase subunit SecA</fullName>
        <ecNumber evidence="1">7.4.2.8</ecNumber>
    </recommendedName>
</protein>
<reference key="1">
    <citation type="journal article" date="2010" name="J. Bacteriol.">
        <title>Genome sequence of the deep-rooted Yersinia pestis strain Angola reveals new insights into the evolution and pangenome of the plague bacterium.</title>
        <authorList>
            <person name="Eppinger M."/>
            <person name="Worsham P.L."/>
            <person name="Nikolich M.P."/>
            <person name="Riley D.R."/>
            <person name="Sebastian Y."/>
            <person name="Mou S."/>
            <person name="Achtman M."/>
            <person name="Lindler L.E."/>
            <person name="Ravel J."/>
        </authorList>
    </citation>
    <scope>NUCLEOTIDE SEQUENCE [LARGE SCALE GENOMIC DNA]</scope>
    <source>
        <strain>Angola</strain>
    </source>
</reference>
<comment type="function">
    <text evidence="1">Part of the Sec protein translocase complex. Interacts with the SecYEG preprotein conducting channel. Has a central role in coupling the hydrolysis of ATP to the transfer of proteins into and across the cell membrane, serving both as a receptor for the preprotein-SecB complex and as an ATP-driven molecular motor driving the stepwise translocation of polypeptide chains across the membrane.</text>
</comment>
<comment type="catalytic activity">
    <reaction evidence="1">
        <text>ATP + H2O + cellular proteinSide 1 = ADP + phosphate + cellular proteinSide 2.</text>
        <dbReference type="EC" id="7.4.2.8"/>
    </reaction>
</comment>
<comment type="cofactor">
    <cofactor evidence="1">
        <name>Zn(2+)</name>
        <dbReference type="ChEBI" id="CHEBI:29105"/>
    </cofactor>
    <text evidence="1">May bind 1 zinc ion per subunit.</text>
</comment>
<comment type="subunit">
    <text evidence="1">Monomer and homodimer. Part of the essential Sec protein translocation apparatus which comprises SecA, SecYEG and auxiliary proteins SecDF-YajC and YidC.</text>
</comment>
<comment type="subcellular location">
    <subcellularLocation>
        <location evidence="1">Cell inner membrane</location>
        <topology evidence="1">Peripheral membrane protein</topology>
        <orientation evidence="1">Cytoplasmic side</orientation>
    </subcellularLocation>
    <subcellularLocation>
        <location evidence="1">Cytoplasm</location>
    </subcellularLocation>
    <text evidence="1">Distribution is 50-50.</text>
</comment>
<comment type="induction">
    <text evidence="1">Repressed under conditions of excess protein secretion capacity and derepressed when protein secretion becomes limiting. This is regulated by SecM.</text>
</comment>
<comment type="similarity">
    <text evidence="1">Belongs to the SecA family.</text>
</comment>
<accession>A9R0R9</accession>
<sequence length="904" mass="102625">MLIKLLTKVFGSRNDRTLRRMQKVVDVINRMEPDIEKLTDTELRAKTDEFRERLAKGEVLENLIPEAFAVVREASKRVFGMRHFDVQLLGGMVLNERCIAEMRTGEGKTLTATLPAYLNALSGRGVHVVTVNDYLAQRDAENNRPLFEFLGLSIGINLPNMTAPAKRAAYAADITYGTNNEFGFDYLRDNMAFSPEERVQRQLHYALVDEVDSILIDEARTPLIISGPAEDSSEMYIRVNKLIPKLIRQEKEDSDSFQGEGHFSVDEKSRQVHLTERGLILIEQMLVEAGIMDEGESLYSPANIMLMHHVTAALRAHVLFTRDVDYIVKDGEVIIVDEHTGRTMQGRRWSDGLHQAVEAKEGVEIQNENQTLASITFQNYFRLYEKLAGMTGTADTEAFEFSSIYKLDTIVVPTNRPMIRKDLADLVYMTEQEKIGAIIEDIRERTANGQPVLVGTISIEKSEVVSAELTKAGIEHKVLNAKFHAMEAEIVSQAGQPGAVTIATNMAGRGTDIVLGGSWQSEIAALEDPTEEQIAAIKAAWQIRHDAVLASGGLHIIGTERHESRRIDNQLRGRAGRQGDAGSSRFYLSMEDALMRIFASDRVSGMMRKLGMKPGEAIEHPWVTKAIANAQRKVESRNFDIRKQLLEYDDVANDQRRAIYSQRNELLDVSDVSETINSIREDVFKTTIDSYIPTQSLEEMWDIEGLEQRLKNDFDLDMPIAKWLEDEPQLHEETLRERILQQAIETYQRKEEVVGIEMMRNFEKGVMLQTLDSLWKEHLAAMDYLRQGIHLRGYAQKDPKQEYKRESFAMFAAMLESLKYEVISVLSKVQVRMPEEVEALEVQRREEAERLARQQQLSHQTDNSALMSEEEVKVANSLERKVGRNDPCPCGSGKKYKQCHGRLQ</sequence>
<keyword id="KW-0067">ATP-binding</keyword>
<keyword id="KW-0997">Cell inner membrane</keyword>
<keyword id="KW-1003">Cell membrane</keyword>
<keyword id="KW-0963">Cytoplasm</keyword>
<keyword id="KW-0472">Membrane</keyword>
<keyword id="KW-0479">Metal-binding</keyword>
<keyword id="KW-0547">Nucleotide-binding</keyword>
<keyword id="KW-0653">Protein transport</keyword>
<keyword id="KW-1278">Translocase</keyword>
<keyword id="KW-0811">Translocation</keyword>
<keyword id="KW-0813">Transport</keyword>
<keyword id="KW-0862">Zinc</keyword>
<name>SECA_YERPG</name>